<comment type="function">
    <text evidence="1">F(1)F(0) ATP synthase produces ATP from ADP in the presence of a proton or sodium gradient. F-type ATPases consist of two structural domains, F(1) containing the extramembraneous catalytic core and F(0) containing the membrane proton channel, linked together by a central stalk and a peripheral stalk. During catalysis, ATP synthesis in the catalytic domain of F(1) is coupled via a rotary mechanism of the central stalk subunits to proton translocation.</text>
</comment>
<comment type="function">
    <text evidence="1">This protein is part of the stalk that links CF(0) to CF(1). It either transmits conformational changes from CF(0) to CF(1) or is implicated in proton conduction.</text>
</comment>
<comment type="subunit">
    <text evidence="1">F-type ATPases have 2 components, F(1) - the catalytic core - and F(0) - the membrane proton channel. F(1) has five subunits: alpha(3), beta(3), gamma(1), delta(1), epsilon(1). F(0) has three main subunits: a(1), b(2) and c(10-14). The alpha and beta chains form an alternating ring which encloses part of the gamma chain. F(1) is attached to F(0) by a central stalk formed by the gamma and epsilon chains, while a peripheral stalk is formed by the delta and b chains.</text>
</comment>
<comment type="subcellular location">
    <subcellularLocation>
        <location evidence="1">Cell inner membrane</location>
        <topology evidence="1">Peripheral membrane protein</topology>
    </subcellularLocation>
</comment>
<comment type="similarity">
    <text evidence="1">Belongs to the ATPase delta chain family.</text>
</comment>
<keyword id="KW-0066">ATP synthesis</keyword>
<keyword id="KW-0997">Cell inner membrane</keyword>
<keyword id="KW-1003">Cell membrane</keyword>
<keyword id="KW-0139">CF(1)</keyword>
<keyword id="KW-0375">Hydrogen ion transport</keyword>
<keyword id="KW-0406">Ion transport</keyword>
<keyword id="KW-0472">Membrane</keyword>
<keyword id="KW-1185">Reference proteome</keyword>
<keyword id="KW-0813">Transport</keyword>
<reference key="1">
    <citation type="journal article" date="2004" name="Proc. Natl. Acad. Sci. U.S.A.">
        <title>Genome sequence of the deep-sea gamma-proteobacterium Idiomarina loihiensis reveals amino acid fermentation as a source of carbon and energy.</title>
        <authorList>
            <person name="Hou S."/>
            <person name="Saw J.H."/>
            <person name="Lee K.S."/>
            <person name="Freitas T.A."/>
            <person name="Belisle C."/>
            <person name="Kawarabayasi Y."/>
            <person name="Donachie S.P."/>
            <person name="Pikina A."/>
            <person name="Galperin M.Y."/>
            <person name="Koonin E.V."/>
            <person name="Makarova K.S."/>
            <person name="Omelchenko M.V."/>
            <person name="Sorokin A."/>
            <person name="Wolf Y.I."/>
            <person name="Li Q.X."/>
            <person name="Keum Y.S."/>
            <person name="Campbell S."/>
            <person name="Denery J."/>
            <person name="Aizawa S."/>
            <person name="Shibata S."/>
            <person name="Malahoff A."/>
            <person name="Alam M."/>
        </authorList>
    </citation>
    <scope>NUCLEOTIDE SEQUENCE [LARGE SCALE GENOMIC DNA]</scope>
    <source>
        <strain>ATCC BAA-735 / DSM 15497 / L2-TR</strain>
    </source>
</reference>
<proteinExistence type="inferred from homology"/>
<accession>Q5QZI3</accession>
<organism>
    <name type="scientific">Idiomarina loihiensis (strain ATCC BAA-735 / DSM 15497 / L2-TR)</name>
    <dbReference type="NCBI Taxonomy" id="283942"/>
    <lineage>
        <taxon>Bacteria</taxon>
        <taxon>Pseudomonadati</taxon>
        <taxon>Pseudomonadota</taxon>
        <taxon>Gammaproteobacteria</taxon>
        <taxon>Alteromonadales</taxon>
        <taxon>Idiomarinaceae</taxon>
        <taxon>Idiomarina</taxon>
    </lineage>
</organism>
<protein>
    <recommendedName>
        <fullName evidence="1">ATP synthase subunit delta</fullName>
    </recommendedName>
    <alternativeName>
        <fullName evidence="1">ATP synthase F(1) sector subunit delta</fullName>
    </alternativeName>
    <alternativeName>
        <fullName evidence="1">F-type ATPase subunit delta</fullName>
        <shortName evidence="1">F-ATPase subunit delta</shortName>
    </alternativeName>
</protein>
<feature type="chain" id="PRO_0000371000" description="ATP synthase subunit delta">
    <location>
        <begin position="1"/>
        <end position="177"/>
    </location>
</feature>
<sequence length="177" mass="19189">MSELTTVARPYAKAAFDFALEQGALDKWAEMLSFAAAVAQDETIASFLSSSSTVGKTTEVFLGVCGDELDDNAKNFVKVLAENERLPVLPAVSELYQTLRAEHDKEVTVDVKSAVKLLKAQQTALIKALEKRLQRKIKLNCSVDKSIIGGLVIEAGDTVIDGTLRGKLDRLAYALQS</sequence>
<gene>
    <name evidence="1" type="primary">atpH</name>
    <name type="ordered locus">IL2622</name>
</gene>
<dbReference type="EMBL" id="AE017340">
    <property type="protein sequence ID" value="AAV83454.1"/>
    <property type="molecule type" value="Genomic_DNA"/>
</dbReference>
<dbReference type="RefSeq" id="WP_011235845.1">
    <property type="nucleotide sequence ID" value="NC_006512.1"/>
</dbReference>
<dbReference type="SMR" id="Q5QZI3"/>
<dbReference type="STRING" id="283942.IL2622"/>
<dbReference type="GeneID" id="41337821"/>
<dbReference type="KEGG" id="ilo:IL2622"/>
<dbReference type="eggNOG" id="COG0712">
    <property type="taxonomic scope" value="Bacteria"/>
</dbReference>
<dbReference type="HOGENOM" id="CLU_085114_3_0_6"/>
<dbReference type="OrthoDB" id="9816221at2"/>
<dbReference type="Proteomes" id="UP000001171">
    <property type="component" value="Chromosome"/>
</dbReference>
<dbReference type="GO" id="GO:0005886">
    <property type="term" value="C:plasma membrane"/>
    <property type="evidence" value="ECO:0007669"/>
    <property type="project" value="UniProtKB-SubCell"/>
</dbReference>
<dbReference type="GO" id="GO:0045259">
    <property type="term" value="C:proton-transporting ATP synthase complex"/>
    <property type="evidence" value="ECO:0007669"/>
    <property type="project" value="UniProtKB-KW"/>
</dbReference>
<dbReference type="GO" id="GO:0046933">
    <property type="term" value="F:proton-transporting ATP synthase activity, rotational mechanism"/>
    <property type="evidence" value="ECO:0007669"/>
    <property type="project" value="UniProtKB-UniRule"/>
</dbReference>
<dbReference type="Gene3D" id="1.10.520.20">
    <property type="entry name" value="N-terminal domain of the delta subunit of the F1F0-ATP synthase"/>
    <property type="match status" value="1"/>
</dbReference>
<dbReference type="HAMAP" id="MF_01416">
    <property type="entry name" value="ATP_synth_delta_bact"/>
    <property type="match status" value="1"/>
</dbReference>
<dbReference type="InterPro" id="IPR026015">
    <property type="entry name" value="ATP_synth_OSCP/delta_N_sf"/>
</dbReference>
<dbReference type="InterPro" id="IPR020781">
    <property type="entry name" value="ATPase_OSCP/d_CS"/>
</dbReference>
<dbReference type="InterPro" id="IPR000711">
    <property type="entry name" value="ATPase_OSCP/dsu"/>
</dbReference>
<dbReference type="NCBIfam" id="TIGR01145">
    <property type="entry name" value="ATP_synt_delta"/>
    <property type="match status" value="1"/>
</dbReference>
<dbReference type="NCBIfam" id="NF004402">
    <property type="entry name" value="PRK05758.2-2"/>
    <property type="match status" value="1"/>
</dbReference>
<dbReference type="NCBIfam" id="NF004404">
    <property type="entry name" value="PRK05758.2-5"/>
    <property type="match status" value="1"/>
</dbReference>
<dbReference type="PANTHER" id="PTHR11910">
    <property type="entry name" value="ATP SYNTHASE DELTA CHAIN"/>
    <property type="match status" value="1"/>
</dbReference>
<dbReference type="Pfam" id="PF00213">
    <property type="entry name" value="OSCP"/>
    <property type="match status" value="1"/>
</dbReference>
<dbReference type="PRINTS" id="PR00125">
    <property type="entry name" value="ATPASEDELTA"/>
</dbReference>
<dbReference type="SUPFAM" id="SSF47928">
    <property type="entry name" value="N-terminal domain of the delta subunit of the F1F0-ATP synthase"/>
    <property type="match status" value="1"/>
</dbReference>
<dbReference type="PROSITE" id="PS00389">
    <property type="entry name" value="ATPASE_DELTA"/>
    <property type="match status" value="1"/>
</dbReference>
<evidence type="ECO:0000255" key="1">
    <source>
        <dbReference type="HAMAP-Rule" id="MF_01416"/>
    </source>
</evidence>
<name>ATPD_IDILO</name>